<organism>
    <name type="scientific">Comamonas testosteroni</name>
    <name type="common">Pseudomonas testosteroni</name>
    <dbReference type="NCBI Taxonomy" id="285"/>
    <lineage>
        <taxon>Bacteria</taxon>
        <taxon>Pseudomonadati</taxon>
        <taxon>Pseudomonadota</taxon>
        <taxon>Betaproteobacteria</taxon>
        <taxon>Burkholderiales</taxon>
        <taxon>Comamonadaceae</taxon>
        <taxon>Comamonas</taxon>
    </lineage>
</organism>
<keyword id="KW-0002">3D-structure</keyword>
<keyword id="KW-0058">Aromatic hydrocarbons catabolism</keyword>
<keyword id="KW-0223">Dioxygenase</keyword>
<keyword id="KW-0903">Direct protein sequencing</keyword>
<keyword id="KW-0408">Iron</keyword>
<keyword id="KW-0479">Metal-binding</keyword>
<keyword id="KW-0560">Oxidoreductase</keyword>
<keyword id="KW-0614">Plasmid</keyword>
<protein>
    <recommendedName>
        <fullName evidence="6">2-aminophenol 1,6-dioxygenase subunit beta</fullName>
        <ecNumber>1.13.11.74</ecNumber>
    </recommendedName>
    <alternativeName>
        <fullName evidence="9">2-amino-5-chlorophenol 1,6-dioxygenase subunit beta</fullName>
        <ecNumber>1.13.11.76</ecNumber>
    </alternativeName>
</protein>
<gene>
    <name evidence="9" type="primary">cnbCb</name>
    <name evidence="8" type="synonym">amnB</name>
</gene>
<dbReference type="EC" id="1.13.11.74"/>
<dbReference type="EC" id="1.13.11.76"/>
<dbReference type="EMBL" id="AY605054">
    <property type="protein sequence ID" value="AAT35226.1"/>
    <property type="status" value="ALT_INIT"/>
    <property type="molecule type" value="Genomic_DNA"/>
</dbReference>
<dbReference type="EMBL" id="EF079106">
    <property type="protein sequence ID" value="ABB13577.1"/>
    <property type="molecule type" value="Genomic_DNA"/>
</dbReference>
<dbReference type="RefSeq" id="YP_001967698.1">
    <property type="nucleotide sequence ID" value="NC_010935.1"/>
</dbReference>
<dbReference type="PDB" id="3VSG">
    <property type="method" value="X-ray"/>
    <property type="resolution" value="2.40 A"/>
    <property type="chains" value="B/D=1-312"/>
</dbReference>
<dbReference type="PDB" id="3VSH">
    <property type="method" value="X-ray"/>
    <property type="resolution" value="2.70 A"/>
    <property type="chains" value="B/D=1-312"/>
</dbReference>
<dbReference type="PDB" id="3VSI">
    <property type="method" value="X-ray"/>
    <property type="resolution" value="2.50 A"/>
    <property type="chains" value="B/D=1-312"/>
</dbReference>
<dbReference type="PDB" id="3VSJ">
    <property type="method" value="X-ray"/>
    <property type="resolution" value="2.30 A"/>
    <property type="chains" value="B/D=1-312"/>
</dbReference>
<dbReference type="PDBsum" id="3VSG"/>
<dbReference type="PDBsum" id="3VSH"/>
<dbReference type="PDBsum" id="3VSI"/>
<dbReference type="PDBsum" id="3VSJ"/>
<dbReference type="SMR" id="Q6J1Z6"/>
<dbReference type="KEGG" id="ag:AAT35226"/>
<dbReference type="PATRIC" id="fig|688245.4.peg.54"/>
<dbReference type="BioCyc" id="MetaCyc:MONOMER-13344"/>
<dbReference type="BRENDA" id="1.13.11.74">
    <property type="organism ID" value="1590"/>
</dbReference>
<dbReference type="UniPathway" id="UPA00923"/>
<dbReference type="UniPathway" id="UPA01033"/>
<dbReference type="EvolutionaryTrace" id="Q6J1Z6"/>
<dbReference type="GO" id="GO:0008198">
    <property type="term" value="F:ferrous iron binding"/>
    <property type="evidence" value="ECO:0007669"/>
    <property type="project" value="InterPro"/>
</dbReference>
<dbReference type="GO" id="GO:0016702">
    <property type="term" value="F:oxidoreductase activity, acting on single donors with incorporation of molecular oxygen, incorporation of two atoms of oxygen"/>
    <property type="evidence" value="ECO:0007669"/>
    <property type="project" value="UniProtKB-ARBA"/>
</dbReference>
<dbReference type="GO" id="GO:0009056">
    <property type="term" value="P:catabolic process"/>
    <property type="evidence" value="ECO:0007669"/>
    <property type="project" value="UniProtKB-KW"/>
</dbReference>
<dbReference type="CDD" id="cd07372">
    <property type="entry name" value="2A5CPDO_B"/>
    <property type="match status" value="1"/>
</dbReference>
<dbReference type="Gene3D" id="3.40.830.10">
    <property type="entry name" value="LigB-like"/>
    <property type="match status" value="1"/>
</dbReference>
<dbReference type="InterPro" id="IPR034943">
    <property type="entry name" value="2A5CPDO_B"/>
</dbReference>
<dbReference type="InterPro" id="IPR004183">
    <property type="entry name" value="Xdiol_dOase_suB"/>
</dbReference>
<dbReference type="Pfam" id="PF02900">
    <property type="entry name" value="LigB"/>
    <property type="match status" value="1"/>
</dbReference>
<dbReference type="SUPFAM" id="SSF53213">
    <property type="entry name" value="LigB-like"/>
    <property type="match status" value="1"/>
</dbReference>
<name>AMNB_COMTE</name>
<proteinExistence type="evidence at protein level"/>
<feature type="chain" id="PRO_0000422781" description="2-aminophenol 1,6-dioxygenase subunit beta">
    <location>
        <begin position="1"/>
        <end position="312"/>
    </location>
</feature>
<feature type="binding site" evidence="5">
    <location>
        <position position="13"/>
    </location>
    <ligand>
        <name>Fe cation</name>
        <dbReference type="ChEBI" id="CHEBI:24875"/>
    </ligand>
</feature>
<feature type="binding site" evidence="5">
    <location>
        <position position="62"/>
    </location>
    <ligand>
        <name>Fe cation</name>
        <dbReference type="ChEBI" id="CHEBI:24875"/>
    </ligand>
</feature>
<feature type="binding site" evidence="5">
    <location>
        <position position="251"/>
    </location>
    <ligand>
        <name>Fe cation</name>
        <dbReference type="ChEBI" id="CHEBI:24875"/>
    </ligand>
</feature>
<feature type="mutagenesis site" description="Loss of enzyme activity." evidence="5">
    <original>H</original>
    <variation>A</variation>
    <location>
        <position position="13"/>
    </location>
</feature>
<feature type="mutagenesis site" description="Loss of enzyme activity." evidence="5">
    <original>H</original>
    <variation>A</variation>
    <location>
        <position position="62"/>
    </location>
</feature>
<feature type="mutagenesis site" description="Loss of enzyme activity." evidence="5">
    <original>Y</original>
    <variation>F</variation>
    <location>
        <position position="129"/>
    </location>
</feature>
<feature type="mutagenesis site" description="Loss of enzyme activity." evidence="5">
    <original>H</original>
    <variation>Q</variation>
    <location>
        <position position="195"/>
    </location>
</feature>
<feature type="mutagenesis site" description="Loss of enzyme activity." evidence="5">
    <original>E</original>
    <variation>A</variation>
    <location>
        <position position="251"/>
    </location>
</feature>
<feature type="sequence conflict" description="In Ref. 1; AA sequence." evidence="2" ref="1">
    <original>G</original>
    <variation>E</variation>
    <location>
        <position position="8"/>
    </location>
</feature>
<feature type="strand" evidence="11">
    <location>
        <begin position="2"/>
        <end position="10"/>
    </location>
</feature>
<feature type="helix" evidence="11">
    <location>
        <begin position="16"/>
        <end position="19"/>
    </location>
</feature>
<feature type="helix" evidence="11">
    <location>
        <begin position="35"/>
        <end position="51"/>
    </location>
</feature>
<feature type="strand" evidence="11">
    <location>
        <begin position="54"/>
        <end position="72"/>
    </location>
</feature>
<feature type="strand" evidence="11">
    <location>
        <begin position="75"/>
        <end position="82"/>
    </location>
</feature>
<feature type="turn" evidence="11">
    <location>
        <begin position="87"/>
        <end position="89"/>
    </location>
</feature>
<feature type="strand" evidence="11">
    <location>
        <begin position="91"/>
        <end position="98"/>
    </location>
</feature>
<feature type="helix" evidence="11">
    <location>
        <begin position="100"/>
        <end position="112"/>
    </location>
</feature>
<feature type="strand" evidence="11">
    <location>
        <begin position="117"/>
        <end position="120"/>
    </location>
</feature>
<feature type="helix" evidence="11">
    <location>
        <begin position="129"/>
        <end position="138"/>
    </location>
</feature>
<feature type="strand" evidence="11">
    <location>
        <begin position="146"/>
        <end position="153"/>
    </location>
</feature>
<feature type="helix" evidence="11">
    <location>
        <begin position="154"/>
        <end position="157"/>
    </location>
</feature>
<feature type="helix" evidence="11">
    <location>
        <begin position="160"/>
        <end position="181"/>
    </location>
</feature>
<feature type="strand" evidence="11">
    <location>
        <begin position="184"/>
        <end position="189"/>
    </location>
</feature>
<feature type="helix" evidence="11">
    <location>
        <begin position="208"/>
        <end position="210"/>
    </location>
</feature>
<feature type="helix" evidence="11">
    <location>
        <begin position="216"/>
        <end position="231"/>
    </location>
</feature>
<feature type="helix" evidence="11">
    <location>
        <begin position="234"/>
        <end position="248"/>
    </location>
</feature>
<feature type="helix" evidence="11">
    <location>
        <begin position="251"/>
        <end position="254"/>
    </location>
</feature>
<feature type="helix" evidence="11">
    <location>
        <begin position="256"/>
        <end position="263"/>
    </location>
</feature>
<feature type="strand" evidence="11">
    <location>
        <begin position="272"/>
        <end position="279"/>
    </location>
</feature>
<feature type="strand" evidence="11">
    <location>
        <begin position="282"/>
        <end position="290"/>
    </location>
</feature>
<feature type="helix" evidence="11">
    <location>
        <begin position="291"/>
        <end position="294"/>
    </location>
</feature>
<feature type="strand" evidence="11">
    <location>
        <begin position="298"/>
        <end position="301"/>
    </location>
</feature>
<sequence>MQGEIIAGFLAPHPPHLVYGENPPQNEPRSQGGWEVLRWAYERARERLDAMKPDVLLVHSPHWITSVGHHFLGVPELSGKSVDPIFPNVFRYDFSLNVDVELAEACAEEGRKAGLVTKMMRNPKFRVDYGTITTLHLIRPQWDIPVVGISANNSPYYLNTKEGMSEMDVLGKATREAIRKTGRKAVLLASNTLSHWHFHEEPTIPEDMSKEYPATMAGYQWDIRMIELMRQGKTSEVFKLLPQFIDEAFAEVKSGAFTWMHAAMQYPELAAELFGYGTVIGTGNAVMEWDLRKAGLSMLGAADQKQRSAAVA</sequence>
<comment type="function">
    <text evidence="2 3">Component of the 2-aminophenol 1,6-dioxygenase (APD) complex that catalyzes the ring fission of 2-aminophenol to produce 2-aminomuconic semialdehyde. CnbCb seems to be the catalytic subunit of the complex. Also active on other substrates such as 2-amino-5-chlorophenol (68% activity), protocatechuate (33% activity) and catechol (5% activity). Both 2-aminophenol and 2-amino-5-cholorophenol are likely native substrates for this dioxygenase which is involved in the reductive degradation pathway of both nitrobenzene (NB) and 4-chloronitrobenzene (4-CNB), allowing C.testosteroni strain CNB-1 to grow on these compounds as sole source of carbon, nitrogen, and energy.</text>
</comment>
<comment type="catalytic activity">
    <reaction evidence="2">
        <text>2-aminophenol + O2 = 2-aminomuconate 6-semialdehyde</text>
        <dbReference type="Rhea" id="RHEA:26305"/>
        <dbReference type="ChEBI" id="CHEBI:15379"/>
        <dbReference type="ChEBI" id="CHEBI:18112"/>
        <dbReference type="ChEBI" id="CHEBI:77634"/>
        <dbReference type="EC" id="1.13.11.74"/>
    </reaction>
</comment>
<comment type="catalytic activity">
    <reaction evidence="2">
        <text>2-amino-5-chlorophenol + O2 = 2-amino-5-chloromuconate 6-semialdehyde</text>
        <dbReference type="Rhea" id="RHEA:37543"/>
        <dbReference type="ChEBI" id="CHEBI:15379"/>
        <dbReference type="ChEBI" id="CHEBI:75051"/>
        <dbReference type="ChEBI" id="CHEBI:75057"/>
        <dbReference type="EC" id="1.13.11.76"/>
    </reaction>
</comment>
<comment type="cofactor">
    <cofactor evidence="2 5">
        <name>Fe(2+)</name>
        <dbReference type="ChEBI" id="CHEBI:29033"/>
    </cofactor>
    <text evidence="2 5">Binds 2 Fe(2+) ions per APD complex. The iron ions are bound to the beta subunit.</text>
</comment>
<comment type="activity regulation">
    <text evidence="2 5">Complete loss of activity in the presence of Ni(2+), Co(2+), Cd(2+), Zn(2+) and hydrogen peroxide, however activity with hydrogen peroxide partially restored upon addition of excess ascorbate. Partially inhibited by Fe(2+), Mg(2+), Ca(2+), Mn(2+), Cu(2+) and also by EDTA, at 2 mM concentration. Total activity inhibited in the presence of catechol or 4-nitrocatechol but completely restored after removal of catechol and addition of 2 mM Fe(2+) and 5 mM ascorbate.</text>
</comment>
<comment type="biophysicochemical properties">
    <kinetics>
        <KM evidence="2">0.89 uM for 2-aminophenol</KM>
        <KM evidence="5">17.1 uM for 2-aminophenol</KM>
        <KM evidence="2">0.77 uM for 2-amino-5-chlorophenol</KM>
        <KM evidence="5">6.84 uM for catechol</KM>
        <KM evidence="5">77.5 uM for oxygen (in the presence of 2-aminophenol)</KM>
        <KM evidence="5">58.3 uM for oxygen (in the presence of catechol)</KM>
        <Vmax evidence="2">44.6 umol/min/mg enzyme with 2-aminophenol as substrate</Vmax>
        <Vmax evidence="5">19.0 umol/min/mg enzyme with 2-aminophenol as substrate</Vmax>
        <Vmax evidence="2">19.3 umol/min/mg enzyme with 2-amino-5-chlorophenol as substrate</Vmax>
        <Vmax evidence="5">1.12 umol/min/mg enzyme with catechol as substrate</Vmax>
    </kinetics>
</comment>
<comment type="pathway">
    <text evidence="3 4">Xenobiotic degradation; nitrobenzene degradation.</text>
</comment>
<comment type="pathway">
    <text>Xenobiotic degradation; 4-chloronitrobenzene degradation.</text>
</comment>
<comment type="subunit">
    <text evidence="2 5">The APD complex is a heterotetramer of 2 alpha (CnbCa) and 2 beta (CnbCb) subunits.</text>
</comment>
<comment type="miscellaneous">
    <text>Not active on 4-methylcatechol, 4-chlorocatechol, 2,4-dihydroxybenzoate, o-nitrophenol, p-nitrophenol or 4-nitrocatechol.</text>
</comment>
<comment type="similarity">
    <text evidence="1">Belongs to the LigB/MhpB extradiol dioxygenase family.</text>
</comment>
<comment type="sequence caution" evidence="7">
    <conflict type="erroneous initiation">
        <sequence resource="EMBL-CDS" id="AAT35226"/>
    </conflict>
    <text>Extended N-terminus.</text>
</comment>
<reference evidence="7 8" key="1">
    <citation type="journal article" date="2005" name="Arch. Microbiol.">
        <title>A novel 2-aminophenol 1,6-dioxygenase involved in the degradation of p-chloronitrobenzene by Comamonas strain CNB-1: purification, properties, genetic cloning and expression in Escherichia coli.</title>
        <authorList>
            <person name="Wu J.F."/>
            <person name="Sun C.W."/>
            <person name="Jiang C.Y."/>
            <person name="Liu Z.P."/>
            <person name="Liu S.J."/>
        </authorList>
    </citation>
    <scope>NUCLEOTIDE SEQUENCE [GENOMIC DNA]</scope>
    <scope>PROTEIN SEQUENCE OF 1-8</scope>
    <scope>FUNCTION</scope>
    <scope>CATALYTIC ACTIVITY</scope>
    <scope>COFACTOR</scope>
    <scope>SUBSTRATE SPECIFICITY</scope>
    <scope>ACTIVITY REGULATION</scope>
    <scope>BIOPHYSICOCHEMICAL PROPERTIES</scope>
    <scope>SUBUNIT</scope>
    <source>
        <strain evidence="2">CNB-1</strain>
        <plasmid>pCNB1</plasmid>
    </source>
</reference>
<reference evidence="7 9" key="2">
    <citation type="journal article" date="2006" name="Appl. Environ. Microbiol.">
        <title>Novel partial reductive pathway for 4-chloronitrobenzene and nitrobenzene degradation in Comamonas sp. strain CNB-1.</title>
        <authorList>
            <person name="Wu J.F."/>
            <person name="Jiang C.Y."/>
            <person name="Wang B.J."/>
            <person name="Ma Y.F."/>
            <person name="Liu Z.P."/>
            <person name="Liu S.J."/>
        </authorList>
    </citation>
    <scope>NUCLEOTIDE SEQUENCE [GENOMIC DNA]</scope>
    <scope>FUNCTION</scope>
    <scope>PATHWAY</scope>
    <source>
        <strain evidence="3">CNB-1</strain>
        <plasmid>pCNB1</plasmid>
    </source>
</reference>
<reference evidence="7 9" key="3">
    <citation type="journal article" date="2007" name="Appl. Environ. Microbiol.">
        <title>Nucleotide sequence of plasmid pCNB1 from Comamonas strain CNB-1 reveals novel genetic organization and evolution for 4-chloronitrobenzene degradation.</title>
        <authorList>
            <person name="Ma Y.F."/>
            <person name="Wu J.F."/>
            <person name="Wang S.Y."/>
            <person name="Jiang C.Y."/>
            <person name="Zhang Y."/>
            <person name="Qi S.W."/>
            <person name="Liu L."/>
            <person name="Zhao G.P."/>
            <person name="Liu S.J."/>
        </authorList>
    </citation>
    <scope>NUCLEOTIDE SEQUENCE [GENOMIC DNA]</scope>
    <scope>PATHWAY</scope>
    <source>
        <strain evidence="4">CNB-1</strain>
        <plasmid>pCNB1</plasmid>
    </source>
</reference>
<reference evidence="7 10" key="4">
    <citation type="journal article" date="2013" name="Acta Crystallogr. D">
        <title>Structures of aminophenol dioxygenase in complex with intermediate, product and inhibitor.</title>
        <authorList>
            <person name="Li de F."/>
            <person name="Zhang J.Y."/>
            <person name="Hou Y.J."/>
            <person name="Liu L."/>
            <person name="Hu Y."/>
            <person name="Liu S.J."/>
            <person name="Wang da C."/>
            <person name="Liu W."/>
        </authorList>
    </citation>
    <scope>X-RAY CRYSTALLOGRAPHY (2.30 ANGSTROMS) IN COMPLEX WITH ALPHA SUBUNIT AND IN COMPLEXES WITH REACTION INTERMEDIATE; PRODUCT; INHIBITOR AND IRON</scope>
    <scope>COFACTOR</scope>
    <scope>ACTIVITY REGULATION</scope>
    <scope>BIOPHYSICOCHEMICAL PROPERTIES</scope>
    <scope>SUBUNIT</scope>
    <scope>REACTION MECHANISM</scope>
    <scope>MUTAGENESIS OF HIS-13; HIS-62; TYR-129; HIS-195 AND GLU-251</scope>
    <source>
        <strain evidence="5">CNB-1</strain>
        <plasmid>pCNB1</plasmid>
    </source>
</reference>
<geneLocation type="plasmid">
    <name>pCNB1</name>
</geneLocation>
<accession>Q6J1Z6</accession>
<accession>Q38M41</accession>
<evidence type="ECO:0000255" key="1"/>
<evidence type="ECO:0000269" key="2">
    <source>
    </source>
</evidence>
<evidence type="ECO:0000269" key="3">
    <source>
    </source>
</evidence>
<evidence type="ECO:0000269" key="4">
    <source>
    </source>
</evidence>
<evidence type="ECO:0000269" key="5">
    <source>
    </source>
</evidence>
<evidence type="ECO:0000303" key="6">
    <source>
    </source>
</evidence>
<evidence type="ECO:0000305" key="7"/>
<evidence type="ECO:0000312" key="8">
    <source>
        <dbReference type="EMBL" id="AAT35226.1"/>
    </source>
</evidence>
<evidence type="ECO:0000312" key="9">
    <source>
        <dbReference type="EMBL" id="ABB13577.1"/>
    </source>
</evidence>
<evidence type="ECO:0000312" key="10">
    <source>
        <dbReference type="PDB" id="3VSG"/>
    </source>
</evidence>
<evidence type="ECO:0007829" key="11">
    <source>
        <dbReference type="PDB" id="3VSJ"/>
    </source>
</evidence>